<organism>
    <name type="scientific">Rickettsia africae (strain ESF-5)</name>
    <dbReference type="NCBI Taxonomy" id="347255"/>
    <lineage>
        <taxon>Bacteria</taxon>
        <taxon>Pseudomonadati</taxon>
        <taxon>Pseudomonadota</taxon>
        <taxon>Alphaproteobacteria</taxon>
        <taxon>Rickettsiales</taxon>
        <taxon>Rickettsiaceae</taxon>
        <taxon>Rickettsieae</taxon>
        <taxon>Rickettsia</taxon>
        <taxon>spotted fever group</taxon>
    </lineage>
</organism>
<keyword id="KW-0067">ATP-binding</keyword>
<keyword id="KW-0436">Ligase</keyword>
<keyword id="KW-0547">Nucleotide-binding</keyword>
<keyword id="KW-0648">Protein biosynthesis</keyword>
<comment type="function">
    <text evidence="1">Allows the formation of correctly charged Gln-tRNA(Gln) through the transamidation of misacylated Glu-tRNA(Gln) in organisms which lack glutaminyl-tRNA synthetase. The reaction takes place in the presence of glutamine and ATP through an activated gamma-phospho-Glu-tRNA(Gln).</text>
</comment>
<comment type="catalytic activity">
    <reaction evidence="1">
        <text>L-glutamyl-tRNA(Gln) + L-glutamine + ATP + H2O = L-glutaminyl-tRNA(Gln) + L-glutamate + ADP + phosphate + H(+)</text>
        <dbReference type="Rhea" id="RHEA:17521"/>
        <dbReference type="Rhea" id="RHEA-COMP:9681"/>
        <dbReference type="Rhea" id="RHEA-COMP:9684"/>
        <dbReference type="ChEBI" id="CHEBI:15377"/>
        <dbReference type="ChEBI" id="CHEBI:15378"/>
        <dbReference type="ChEBI" id="CHEBI:29985"/>
        <dbReference type="ChEBI" id="CHEBI:30616"/>
        <dbReference type="ChEBI" id="CHEBI:43474"/>
        <dbReference type="ChEBI" id="CHEBI:58359"/>
        <dbReference type="ChEBI" id="CHEBI:78520"/>
        <dbReference type="ChEBI" id="CHEBI:78521"/>
        <dbReference type="ChEBI" id="CHEBI:456216"/>
        <dbReference type="EC" id="6.3.5.7"/>
    </reaction>
</comment>
<comment type="subunit">
    <text evidence="1">Heterotrimer of A, B and C subunits.</text>
</comment>
<comment type="similarity">
    <text evidence="1">Belongs to the amidase family. GatA subfamily.</text>
</comment>
<proteinExistence type="inferred from homology"/>
<name>GATA_RICAE</name>
<reference key="1">
    <citation type="journal article" date="2009" name="BMC Genomics">
        <title>Analysis of the Rickettsia africae genome reveals that virulence acquisition in Rickettsia species may be explained by genome reduction.</title>
        <authorList>
            <person name="Fournier P.-E."/>
            <person name="El Karkouri K."/>
            <person name="Leroy Q."/>
            <person name="Robert C."/>
            <person name="Giumelli B."/>
            <person name="Renesto P."/>
            <person name="Socolovschi C."/>
            <person name="Parola P."/>
            <person name="Audic S."/>
            <person name="Raoult D."/>
        </authorList>
    </citation>
    <scope>NUCLEOTIDE SEQUENCE [LARGE SCALE GENOMIC DNA]</scope>
    <source>
        <strain>ESF-5</strain>
    </source>
</reference>
<evidence type="ECO:0000255" key="1">
    <source>
        <dbReference type="HAMAP-Rule" id="MF_00120"/>
    </source>
</evidence>
<accession>C3PMJ0</accession>
<feature type="chain" id="PRO_1000203042" description="Glutamyl-tRNA(Gln) amidotransferase subunit A">
    <location>
        <begin position="1"/>
        <end position="493"/>
    </location>
</feature>
<feature type="active site" description="Charge relay system" evidence="1">
    <location>
        <position position="78"/>
    </location>
</feature>
<feature type="active site" description="Charge relay system" evidence="1">
    <location>
        <position position="158"/>
    </location>
</feature>
<feature type="active site" description="Acyl-ester intermediate" evidence="1">
    <location>
        <position position="182"/>
    </location>
</feature>
<dbReference type="EC" id="6.3.5.7" evidence="1"/>
<dbReference type="EMBL" id="CP001612">
    <property type="protein sequence ID" value="ACP53150.1"/>
    <property type="molecule type" value="Genomic_DNA"/>
</dbReference>
<dbReference type="RefSeq" id="WP_012719420.1">
    <property type="nucleotide sequence ID" value="NC_012633.1"/>
</dbReference>
<dbReference type="SMR" id="C3PMJ0"/>
<dbReference type="KEGG" id="raf:RAF_ORF0183"/>
<dbReference type="HOGENOM" id="CLU_009600_0_3_5"/>
<dbReference type="Proteomes" id="UP000002305">
    <property type="component" value="Chromosome"/>
</dbReference>
<dbReference type="GO" id="GO:0030956">
    <property type="term" value="C:glutamyl-tRNA(Gln) amidotransferase complex"/>
    <property type="evidence" value="ECO:0007669"/>
    <property type="project" value="InterPro"/>
</dbReference>
<dbReference type="GO" id="GO:0005524">
    <property type="term" value="F:ATP binding"/>
    <property type="evidence" value="ECO:0007669"/>
    <property type="project" value="UniProtKB-KW"/>
</dbReference>
<dbReference type="GO" id="GO:0050567">
    <property type="term" value="F:glutaminyl-tRNA synthase (glutamine-hydrolyzing) activity"/>
    <property type="evidence" value="ECO:0007669"/>
    <property type="project" value="UniProtKB-UniRule"/>
</dbReference>
<dbReference type="GO" id="GO:0006412">
    <property type="term" value="P:translation"/>
    <property type="evidence" value="ECO:0007669"/>
    <property type="project" value="UniProtKB-UniRule"/>
</dbReference>
<dbReference type="Gene3D" id="3.90.1300.10">
    <property type="entry name" value="Amidase signature (AS) domain"/>
    <property type="match status" value="1"/>
</dbReference>
<dbReference type="HAMAP" id="MF_00120">
    <property type="entry name" value="GatA"/>
    <property type="match status" value="1"/>
</dbReference>
<dbReference type="InterPro" id="IPR000120">
    <property type="entry name" value="Amidase"/>
</dbReference>
<dbReference type="InterPro" id="IPR020556">
    <property type="entry name" value="Amidase_CS"/>
</dbReference>
<dbReference type="InterPro" id="IPR023631">
    <property type="entry name" value="Amidase_dom"/>
</dbReference>
<dbReference type="InterPro" id="IPR036928">
    <property type="entry name" value="AS_sf"/>
</dbReference>
<dbReference type="InterPro" id="IPR004412">
    <property type="entry name" value="GatA"/>
</dbReference>
<dbReference type="NCBIfam" id="TIGR00132">
    <property type="entry name" value="gatA"/>
    <property type="match status" value="1"/>
</dbReference>
<dbReference type="PANTHER" id="PTHR11895:SF151">
    <property type="entry name" value="GLUTAMYL-TRNA(GLN) AMIDOTRANSFERASE SUBUNIT A"/>
    <property type="match status" value="1"/>
</dbReference>
<dbReference type="PANTHER" id="PTHR11895">
    <property type="entry name" value="TRANSAMIDASE"/>
    <property type="match status" value="1"/>
</dbReference>
<dbReference type="Pfam" id="PF01425">
    <property type="entry name" value="Amidase"/>
    <property type="match status" value="1"/>
</dbReference>
<dbReference type="SUPFAM" id="SSF75304">
    <property type="entry name" value="Amidase signature (AS) enzymes"/>
    <property type="match status" value="1"/>
</dbReference>
<dbReference type="PROSITE" id="PS00571">
    <property type="entry name" value="AMIDASES"/>
    <property type="match status" value="1"/>
</dbReference>
<protein>
    <recommendedName>
        <fullName evidence="1">Glutamyl-tRNA(Gln) amidotransferase subunit A</fullName>
        <shortName evidence="1">Glu-ADT subunit A</shortName>
        <ecNumber evidence="1">6.3.5.7</ecNumber>
    </recommendedName>
</protein>
<gene>
    <name evidence="1" type="primary">gatA</name>
    <name type="ordered locus">RAF_ORF0183</name>
</gene>
<sequence>MTELNKLTVADSIKGLKNKDFTSTELIGAHIKQIEKHRNLNAYVTDTFDLALKQAEAADQNYAQNNARTLEGIPFAAKDLFCTKGIRTTACSNILKNFIPNYESSVTQNIFDKGGVMLGKTNMDEFAMGSANITSCFGNVISPWKANDDNADLVPGGSSGGSAAAVSGFMASAALGSDTGGSVRQPASFTGLVGFKPTYGRCSRYGMISFASSLDQAGIFTRSVLDSSIMLEAMMGFDEKDSTSIKAEVPELQSAIGSSMKNMKIGVPLSLGEGSIIEPDIMKMWQDTIELLKNAGAEIVDITLPHAKYGVAVYYVIAPAEASSNLSRYDGVRYGLRVERENMTLDEMYEMTRSTGFGEEVKRRIMIGTYVLSSSGMDAYYLKAQKVRRLVANDFNNAFAKVDAILLPTAPTAAFKIGEKQNDPTIMYLNDLFTIPASLAGLPCASVPAGLSARGLPLGIQIIGKQLDEYNVLKVASTIESGVKHIKFEPKVF</sequence>